<keyword id="KW-0678">Repressor</keyword>
<keyword id="KW-0346">Stress response</keyword>
<keyword id="KW-0804">Transcription</keyword>
<keyword id="KW-0805">Transcription regulation</keyword>
<organism>
    <name type="scientific">Streptococcus pneumoniae (strain P1031)</name>
    <dbReference type="NCBI Taxonomy" id="488223"/>
    <lineage>
        <taxon>Bacteria</taxon>
        <taxon>Bacillati</taxon>
        <taxon>Bacillota</taxon>
        <taxon>Bacilli</taxon>
        <taxon>Lactobacillales</taxon>
        <taxon>Streptococcaceae</taxon>
        <taxon>Streptococcus</taxon>
    </lineage>
</organism>
<dbReference type="EMBL" id="CP000920">
    <property type="protein sequence ID" value="ACO21229.1"/>
    <property type="molecule type" value="Genomic_DNA"/>
</dbReference>
<dbReference type="RefSeq" id="WP_000255779.1">
    <property type="nucleotide sequence ID" value="NC_012467.1"/>
</dbReference>
<dbReference type="SMR" id="C1CJ04"/>
<dbReference type="KEGG" id="spp:SPP_0536"/>
<dbReference type="HOGENOM" id="CLU_050019_1_0_9"/>
<dbReference type="GO" id="GO:0003677">
    <property type="term" value="F:DNA binding"/>
    <property type="evidence" value="ECO:0007669"/>
    <property type="project" value="InterPro"/>
</dbReference>
<dbReference type="GO" id="GO:0045892">
    <property type="term" value="P:negative regulation of DNA-templated transcription"/>
    <property type="evidence" value="ECO:0007669"/>
    <property type="project" value="UniProtKB-UniRule"/>
</dbReference>
<dbReference type="Gene3D" id="3.30.450.40">
    <property type="match status" value="1"/>
</dbReference>
<dbReference type="Gene3D" id="3.30.390.60">
    <property type="entry name" value="Heat-inducible transcription repressor hrca homolog, domain 3"/>
    <property type="match status" value="1"/>
</dbReference>
<dbReference type="Gene3D" id="1.10.10.10">
    <property type="entry name" value="Winged helix-like DNA-binding domain superfamily/Winged helix DNA-binding domain"/>
    <property type="match status" value="1"/>
</dbReference>
<dbReference type="HAMAP" id="MF_00081">
    <property type="entry name" value="HrcA"/>
    <property type="match status" value="1"/>
</dbReference>
<dbReference type="InterPro" id="IPR029016">
    <property type="entry name" value="GAF-like_dom_sf"/>
</dbReference>
<dbReference type="InterPro" id="IPR002571">
    <property type="entry name" value="HrcA"/>
</dbReference>
<dbReference type="InterPro" id="IPR021153">
    <property type="entry name" value="HrcA_C"/>
</dbReference>
<dbReference type="InterPro" id="IPR036388">
    <property type="entry name" value="WH-like_DNA-bd_sf"/>
</dbReference>
<dbReference type="InterPro" id="IPR036390">
    <property type="entry name" value="WH_DNA-bd_sf"/>
</dbReference>
<dbReference type="InterPro" id="IPR005104">
    <property type="entry name" value="WHTH_HrcA_DNA-bd"/>
</dbReference>
<dbReference type="InterPro" id="IPR023120">
    <property type="entry name" value="WHTH_transcript_rep_HrcA_IDD"/>
</dbReference>
<dbReference type="NCBIfam" id="TIGR00331">
    <property type="entry name" value="hrcA"/>
    <property type="match status" value="1"/>
</dbReference>
<dbReference type="PANTHER" id="PTHR34824">
    <property type="entry name" value="HEAT-INDUCIBLE TRANSCRIPTION REPRESSOR HRCA"/>
    <property type="match status" value="1"/>
</dbReference>
<dbReference type="PANTHER" id="PTHR34824:SF1">
    <property type="entry name" value="HEAT-INDUCIBLE TRANSCRIPTION REPRESSOR HRCA"/>
    <property type="match status" value="1"/>
</dbReference>
<dbReference type="Pfam" id="PF01628">
    <property type="entry name" value="HrcA"/>
    <property type="match status" value="1"/>
</dbReference>
<dbReference type="Pfam" id="PF03444">
    <property type="entry name" value="HrcA_DNA-bdg"/>
    <property type="match status" value="1"/>
</dbReference>
<dbReference type="PIRSF" id="PIRSF005485">
    <property type="entry name" value="HrcA"/>
    <property type="match status" value="1"/>
</dbReference>
<dbReference type="SUPFAM" id="SSF55781">
    <property type="entry name" value="GAF domain-like"/>
    <property type="match status" value="1"/>
</dbReference>
<dbReference type="SUPFAM" id="SSF46785">
    <property type="entry name" value="Winged helix' DNA-binding domain"/>
    <property type="match status" value="1"/>
</dbReference>
<proteinExistence type="inferred from homology"/>
<gene>
    <name evidence="1" type="primary">hrcA</name>
    <name type="ordered locus">SPP_0536</name>
</gene>
<comment type="function">
    <text evidence="1">Negative regulator of class I heat shock genes (grpE-dnaK-dnaJ and groELS operons). Prevents heat-shock induction of these operons.</text>
</comment>
<comment type="similarity">
    <text evidence="1">Belongs to the HrcA family.</text>
</comment>
<evidence type="ECO:0000255" key="1">
    <source>
        <dbReference type="HAMAP-Rule" id="MF_00081"/>
    </source>
</evidence>
<protein>
    <recommendedName>
        <fullName evidence="1">Heat-inducible transcription repressor HrcA</fullName>
    </recommendedName>
</protein>
<name>HRCA_STRZP</name>
<reference key="1">
    <citation type="journal article" date="2010" name="Genome Biol.">
        <title>Structure and dynamics of the pan-genome of Streptococcus pneumoniae and closely related species.</title>
        <authorList>
            <person name="Donati C."/>
            <person name="Hiller N.L."/>
            <person name="Tettelin H."/>
            <person name="Muzzi A."/>
            <person name="Croucher N.J."/>
            <person name="Angiuoli S.V."/>
            <person name="Oggioni M."/>
            <person name="Dunning Hotopp J.C."/>
            <person name="Hu F.Z."/>
            <person name="Riley D.R."/>
            <person name="Covacci A."/>
            <person name="Mitchell T.J."/>
            <person name="Bentley S.D."/>
            <person name="Kilian M."/>
            <person name="Ehrlich G.D."/>
            <person name="Rappuoli R."/>
            <person name="Moxon E.R."/>
            <person name="Masignani V."/>
        </authorList>
    </citation>
    <scope>NUCLEOTIDE SEQUENCE [LARGE SCALE GENOMIC DNA]</scope>
    <source>
        <strain>P1031</strain>
    </source>
</reference>
<sequence length="344" mass="39404">MVTERQQDILNLIIDIFTKTHEPVGSKALQESINSSSATIRNDMAELEKQGLLEKAHTSSGRMPSVAGFQYYVKHSLDFHRLAENEVYEIVKAFDQEFFKLEDILQEAANLLTDLSGCTVVALDVEPSRQRLTAFDIVVLGQHTALAVFTLDESRTVTSQFLIPRNFLQEDLLKLKSIIQERFLGHTVLDIHYKIRTEIPQIIQRYFTTTDNVIDLFEHIFKEMFNENIVMAGKVNLLNFANLAAYQFFDQPQKVALEIREGLREDQMQNVRIADGQESCLADLAVISSKFLIPYRGVGILAIIGPVNLDYQQLINQINVVNRVLTMKLTDFYRYLSSNHYEVH</sequence>
<feature type="chain" id="PRO_1000118321" description="Heat-inducible transcription repressor HrcA">
    <location>
        <begin position="1"/>
        <end position="344"/>
    </location>
</feature>
<accession>C1CJ04</accession>